<proteinExistence type="evidence at transcript level"/>
<organism>
    <name type="scientific">Arabidopsis thaliana</name>
    <name type="common">Mouse-ear cress</name>
    <dbReference type="NCBI Taxonomy" id="3702"/>
    <lineage>
        <taxon>Eukaryota</taxon>
        <taxon>Viridiplantae</taxon>
        <taxon>Streptophyta</taxon>
        <taxon>Embryophyta</taxon>
        <taxon>Tracheophyta</taxon>
        <taxon>Spermatophyta</taxon>
        <taxon>Magnoliopsida</taxon>
        <taxon>eudicotyledons</taxon>
        <taxon>Gunneridae</taxon>
        <taxon>Pentapetalae</taxon>
        <taxon>rosids</taxon>
        <taxon>malvids</taxon>
        <taxon>Brassicales</taxon>
        <taxon>Brassicaceae</taxon>
        <taxon>Camelineae</taxon>
        <taxon>Arabidopsis</taxon>
    </lineage>
</organism>
<keyword id="KW-1185">Reference proteome</keyword>
<keyword id="KW-0677">Repeat</keyword>
<keyword id="KW-0853">WD repeat</keyword>
<name>FBW1_ARATH</name>
<feature type="chain" id="PRO_0000272242" description="F-box/WD-40 repeat-containing protein 1">
    <location>
        <begin position="1"/>
        <end position="410"/>
    </location>
</feature>
<feature type="domain" description="F-box" evidence="1">
    <location>
        <begin position="32"/>
        <end position="79"/>
    </location>
</feature>
<feature type="repeat" description="WD 1">
    <location>
        <begin position="109"/>
        <end position="150"/>
    </location>
</feature>
<feature type="repeat" description="WD 2">
    <location>
        <begin position="269"/>
        <end position="309"/>
    </location>
</feature>
<protein>
    <recommendedName>
        <fullName>F-box/WD-40 repeat-containing protein 1</fullName>
    </recommendedName>
    <alternativeName>
        <fullName>WD-40-associated F-box protein 1</fullName>
    </alternativeName>
</protein>
<sequence length="410" mass="47276">MAWFQHVKLYIASCINLFTKIQKPYLSMAMDSKECSLLPFELFEEILCRVPTKSLLRLKLTCKRWLALFNDKRFIYKHLALVREHIIRTNQMVKIINPVVGACSSFSLPNKFQVKGEIYTMVPCDGLLLCIFETGSMAVWNPCLNQVRWIFLLNPSFRGCSCYGIGYDGLSRDSYKILRFVNGVFTKNEYANTGSYKPEVDIYELKSNSWKTFKVSLDWHVVLRCKGLSLKGNMYWIAKWNRKPDIFIQSFNFSTETFEPLCSLPVRYDVHNVVALSAFKGDNLSLLHQSKETSKIDVWVTNKVKNGVSILWTKLFSVTRPDLPVLLAFENLSYPVHFIDKNNRIVVCCEEVLADKRNVAVNIYVIGEDEIKSQDEIEQHQLGFSWPFISGYTYLPSLVPVPSSEDNTPE</sequence>
<dbReference type="EMBL" id="AP001305">
    <property type="protein sequence ID" value="BAB03054.1"/>
    <property type="status" value="ALT_INIT"/>
    <property type="molecule type" value="Genomic_DNA"/>
</dbReference>
<dbReference type="EMBL" id="CP002686">
    <property type="protein sequence ID" value="AEE76506.1"/>
    <property type="molecule type" value="Genomic_DNA"/>
</dbReference>
<dbReference type="EMBL" id="DQ056600">
    <property type="protein sequence ID" value="AAY78748.1"/>
    <property type="molecule type" value="mRNA"/>
</dbReference>
<dbReference type="RefSeq" id="NP_566684.1">
    <property type="nucleotide sequence ID" value="NM_113036.1"/>
</dbReference>
<dbReference type="FunCoup" id="Q4PSN6">
    <property type="interactions" value="2"/>
</dbReference>
<dbReference type="PaxDb" id="3702-AT3G21410.1"/>
<dbReference type="EnsemblPlants" id="AT3G21410.1">
    <property type="protein sequence ID" value="AT3G21410.1"/>
    <property type="gene ID" value="AT3G21410"/>
</dbReference>
<dbReference type="GeneID" id="821695"/>
<dbReference type="Gramene" id="AT3G21410.1">
    <property type="protein sequence ID" value="AT3G21410.1"/>
    <property type="gene ID" value="AT3G21410"/>
</dbReference>
<dbReference type="KEGG" id="ath:AT3G21410"/>
<dbReference type="Araport" id="AT3G21410"/>
<dbReference type="TAIR" id="AT3G21410"/>
<dbReference type="HOGENOM" id="CLU_034692_2_0_1"/>
<dbReference type="InParanoid" id="Q4PSN6"/>
<dbReference type="OMA" id="LCRVPTK"/>
<dbReference type="PhylomeDB" id="Q4PSN6"/>
<dbReference type="PRO" id="PR:Q4PSN6"/>
<dbReference type="Proteomes" id="UP000006548">
    <property type="component" value="Chromosome 3"/>
</dbReference>
<dbReference type="ExpressionAtlas" id="Q4PSN6">
    <property type="expression patterns" value="baseline and differential"/>
</dbReference>
<dbReference type="CDD" id="cd22157">
    <property type="entry name" value="F-box_AtFBW1-like"/>
    <property type="match status" value="1"/>
</dbReference>
<dbReference type="Gene3D" id="1.20.1280.50">
    <property type="match status" value="1"/>
</dbReference>
<dbReference type="InterPro" id="IPR006527">
    <property type="entry name" value="F-box-assoc_dom_typ1"/>
</dbReference>
<dbReference type="InterPro" id="IPR017451">
    <property type="entry name" value="F-box-assoc_interact_dom"/>
</dbReference>
<dbReference type="InterPro" id="IPR036047">
    <property type="entry name" value="F-box-like_dom_sf"/>
</dbReference>
<dbReference type="InterPro" id="IPR001810">
    <property type="entry name" value="F-box_dom"/>
</dbReference>
<dbReference type="InterPro" id="IPR011043">
    <property type="entry name" value="Gal_Oxase/kelch_b-propeller"/>
</dbReference>
<dbReference type="InterPro" id="IPR050796">
    <property type="entry name" value="SCF_F-box_component"/>
</dbReference>
<dbReference type="NCBIfam" id="TIGR01640">
    <property type="entry name" value="F_box_assoc_1"/>
    <property type="match status" value="1"/>
</dbReference>
<dbReference type="PANTHER" id="PTHR31672">
    <property type="entry name" value="BNACNNG10540D PROTEIN"/>
    <property type="match status" value="1"/>
</dbReference>
<dbReference type="PANTHER" id="PTHR31672:SF13">
    <property type="entry name" value="F-BOX PROTEIN CPR30-LIKE"/>
    <property type="match status" value="1"/>
</dbReference>
<dbReference type="Pfam" id="PF00646">
    <property type="entry name" value="F-box"/>
    <property type="match status" value="1"/>
</dbReference>
<dbReference type="Pfam" id="PF07734">
    <property type="entry name" value="FBA_1"/>
    <property type="match status" value="1"/>
</dbReference>
<dbReference type="SMART" id="SM00256">
    <property type="entry name" value="FBOX"/>
    <property type="match status" value="1"/>
</dbReference>
<dbReference type="SUPFAM" id="SSF81383">
    <property type="entry name" value="F-box domain"/>
    <property type="match status" value="1"/>
</dbReference>
<dbReference type="SUPFAM" id="SSF50965">
    <property type="entry name" value="Galactose oxidase, central domain"/>
    <property type="match status" value="1"/>
</dbReference>
<dbReference type="PROSITE" id="PS50181">
    <property type="entry name" value="FBOX"/>
    <property type="match status" value="1"/>
</dbReference>
<reference key="1">
    <citation type="journal article" date="2000" name="DNA Res.">
        <title>Structural analysis of Arabidopsis thaliana chromosome 3. II. Sequence features of the 4,251,695 bp regions covered by 90 P1, TAC and BAC clones.</title>
        <authorList>
            <person name="Kaneko T."/>
            <person name="Katoh T."/>
            <person name="Sato S."/>
            <person name="Nakamura Y."/>
            <person name="Asamizu E."/>
            <person name="Tabata S."/>
        </authorList>
    </citation>
    <scope>NUCLEOTIDE SEQUENCE [LARGE SCALE GENOMIC DNA]</scope>
    <source>
        <strain>cv. Columbia</strain>
    </source>
</reference>
<reference key="2">
    <citation type="journal article" date="2017" name="Plant J.">
        <title>Araport11: a complete reannotation of the Arabidopsis thaliana reference genome.</title>
        <authorList>
            <person name="Cheng C.Y."/>
            <person name="Krishnakumar V."/>
            <person name="Chan A.P."/>
            <person name="Thibaud-Nissen F."/>
            <person name="Schobel S."/>
            <person name="Town C.D."/>
        </authorList>
    </citation>
    <scope>GENOME REANNOTATION</scope>
    <source>
        <strain>cv. Columbia</strain>
    </source>
</reference>
<reference key="3">
    <citation type="submission" date="2005-05" db="EMBL/GenBank/DDBJ databases">
        <authorList>
            <person name="Underwood B.A."/>
            <person name="Xiao Y.-L."/>
            <person name="Moskal W.A. Jr."/>
            <person name="Monaghan E.L."/>
            <person name="Wang W."/>
            <person name="Redman J.C."/>
            <person name="Wu H.C."/>
            <person name="Utterback T."/>
            <person name="Town C.D."/>
        </authorList>
    </citation>
    <scope>NUCLEOTIDE SEQUENCE [LARGE SCALE MRNA]</scope>
    <source>
        <strain>cv. Columbia</strain>
    </source>
</reference>
<reference key="4">
    <citation type="journal article" date="2000" name="Trends Plant Sci.">
        <title>F-box proteins in Arabidopsis.</title>
        <authorList>
            <person name="Xiao W."/>
            <person name="Jang J.-C."/>
        </authorList>
    </citation>
    <scope>GENE FAMILY</scope>
    <scope>NOMENCLATURE</scope>
</reference>
<evidence type="ECO:0000255" key="1">
    <source>
        <dbReference type="PROSITE-ProRule" id="PRU00080"/>
    </source>
</evidence>
<evidence type="ECO:0000305" key="2"/>
<gene>
    <name type="primary">FBW1</name>
    <name type="ordered locus">At3g21410</name>
    <name type="ORF">MHC9.9</name>
</gene>
<comment type="sequence caution" evidence="2">
    <conflict type="erroneous initiation">
        <sequence resource="EMBL-CDS" id="BAB03054"/>
    </conflict>
</comment>
<accession>Q4PSN6</accession>
<accession>Q9LIF5</accession>